<proteinExistence type="inferred from homology"/>
<protein>
    <recommendedName>
        <fullName evidence="1">Isopentenyl-diphosphate delta-isomerase</fullName>
        <shortName evidence="1">IPP isomerase</shortName>
        <ecNumber evidence="1">5.3.3.2</ecNumber>
    </recommendedName>
    <alternativeName>
        <fullName evidence="1">Isopentenyl diphosphate:dimethylallyl diphosphate isomerase</fullName>
    </alternativeName>
    <alternativeName>
        <fullName evidence="1">Isopentenyl pyrophosphate isomerase</fullName>
    </alternativeName>
    <alternativeName>
        <fullName evidence="1">Type 2 isopentenyl diphosphate isomerase</fullName>
        <shortName evidence="1">IDI-2</shortName>
    </alternativeName>
</protein>
<feature type="chain" id="PRO_1000048450" description="Isopentenyl-diphosphate delta-isomerase">
    <location>
        <begin position="1"/>
        <end position="346"/>
    </location>
</feature>
<feature type="binding site" evidence="1">
    <location>
        <begin position="9"/>
        <end position="10"/>
    </location>
    <ligand>
        <name>substrate</name>
    </ligand>
</feature>
<feature type="binding site" evidence="1">
    <location>
        <position position="67"/>
    </location>
    <ligand>
        <name>FMN</name>
        <dbReference type="ChEBI" id="CHEBI:58210"/>
    </ligand>
</feature>
<feature type="binding site" evidence="1">
    <location>
        <begin position="68"/>
        <end position="70"/>
    </location>
    <ligand>
        <name>FMN</name>
        <dbReference type="ChEBI" id="CHEBI:58210"/>
    </ligand>
</feature>
<feature type="binding site" evidence="1">
    <location>
        <begin position="98"/>
        <end position="100"/>
    </location>
    <ligand>
        <name>substrate</name>
    </ligand>
</feature>
<feature type="binding site" evidence="1">
    <location>
        <position position="98"/>
    </location>
    <ligand>
        <name>FMN</name>
        <dbReference type="ChEBI" id="CHEBI:58210"/>
    </ligand>
</feature>
<feature type="binding site" evidence="1">
    <location>
        <position position="127"/>
    </location>
    <ligand>
        <name>FMN</name>
        <dbReference type="ChEBI" id="CHEBI:58210"/>
    </ligand>
</feature>
<feature type="binding site" evidence="1">
    <location>
        <position position="162"/>
    </location>
    <ligand>
        <name>substrate</name>
    </ligand>
</feature>
<feature type="binding site" evidence="1">
    <location>
        <position position="163"/>
    </location>
    <ligand>
        <name>Mg(2+)</name>
        <dbReference type="ChEBI" id="CHEBI:18420"/>
    </ligand>
</feature>
<feature type="binding site" evidence="1">
    <location>
        <position position="194"/>
    </location>
    <ligand>
        <name>FMN</name>
        <dbReference type="ChEBI" id="CHEBI:58210"/>
    </ligand>
</feature>
<feature type="binding site" evidence="1">
    <location>
        <position position="224"/>
    </location>
    <ligand>
        <name>FMN</name>
        <dbReference type="ChEBI" id="CHEBI:58210"/>
    </ligand>
</feature>
<feature type="binding site" evidence="1">
    <location>
        <begin position="274"/>
        <end position="276"/>
    </location>
    <ligand>
        <name>FMN</name>
        <dbReference type="ChEBI" id="CHEBI:58210"/>
    </ligand>
</feature>
<feature type="binding site" evidence="1">
    <location>
        <begin position="295"/>
        <end position="296"/>
    </location>
    <ligand>
        <name>FMN</name>
        <dbReference type="ChEBI" id="CHEBI:58210"/>
    </ligand>
</feature>
<dbReference type="EC" id="5.3.3.2" evidence="1"/>
<dbReference type="EMBL" id="CP000304">
    <property type="protein sequence ID" value="ABP81499.1"/>
    <property type="molecule type" value="Genomic_DNA"/>
</dbReference>
<dbReference type="RefSeq" id="WP_011914884.1">
    <property type="nucleotide sequence ID" value="NC_009434.1"/>
</dbReference>
<dbReference type="SMR" id="A4VR98"/>
<dbReference type="KEGG" id="psa:PST_3876"/>
<dbReference type="eggNOG" id="COG1304">
    <property type="taxonomic scope" value="Bacteria"/>
</dbReference>
<dbReference type="HOGENOM" id="CLU_065515_1_0_6"/>
<dbReference type="Proteomes" id="UP000000233">
    <property type="component" value="Chromosome"/>
</dbReference>
<dbReference type="GO" id="GO:0005737">
    <property type="term" value="C:cytoplasm"/>
    <property type="evidence" value="ECO:0007669"/>
    <property type="project" value="UniProtKB-SubCell"/>
</dbReference>
<dbReference type="GO" id="GO:0010181">
    <property type="term" value="F:FMN binding"/>
    <property type="evidence" value="ECO:0007669"/>
    <property type="project" value="UniProtKB-UniRule"/>
</dbReference>
<dbReference type="GO" id="GO:0004452">
    <property type="term" value="F:isopentenyl-diphosphate delta-isomerase activity"/>
    <property type="evidence" value="ECO:0007669"/>
    <property type="project" value="UniProtKB-UniRule"/>
</dbReference>
<dbReference type="GO" id="GO:0000287">
    <property type="term" value="F:magnesium ion binding"/>
    <property type="evidence" value="ECO:0007669"/>
    <property type="project" value="UniProtKB-UniRule"/>
</dbReference>
<dbReference type="GO" id="GO:0070402">
    <property type="term" value="F:NADPH binding"/>
    <property type="evidence" value="ECO:0007669"/>
    <property type="project" value="UniProtKB-UniRule"/>
</dbReference>
<dbReference type="GO" id="GO:0016491">
    <property type="term" value="F:oxidoreductase activity"/>
    <property type="evidence" value="ECO:0007669"/>
    <property type="project" value="InterPro"/>
</dbReference>
<dbReference type="GO" id="GO:0008299">
    <property type="term" value="P:isoprenoid biosynthetic process"/>
    <property type="evidence" value="ECO:0007669"/>
    <property type="project" value="UniProtKB-UniRule"/>
</dbReference>
<dbReference type="CDD" id="cd02811">
    <property type="entry name" value="IDI-2_FMN"/>
    <property type="match status" value="1"/>
</dbReference>
<dbReference type="Gene3D" id="3.20.20.70">
    <property type="entry name" value="Aldolase class I"/>
    <property type="match status" value="1"/>
</dbReference>
<dbReference type="HAMAP" id="MF_00354">
    <property type="entry name" value="Idi_2"/>
    <property type="match status" value="1"/>
</dbReference>
<dbReference type="InterPro" id="IPR013785">
    <property type="entry name" value="Aldolase_TIM"/>
</dbReference>
<dbReference type="InterPro" id="IPR000262">
    <property type="entry name" value="FMN-dep_DH"/>
</dbReference>
<dbReference type="InterPro" id="IPR011179">
    <property type="entry name" value="IPdP_isomerase"/>
</dbReference>
<dbReference type="NCBIfam" id="TIGR02151">
    <property type="entry name" value="IPP_isom_2"/>
    <property type="match status" value="1"/>
</dbReference>
<dbReference type="PANTHER" id="PTHR43665">
    <property type="entry name" value="ISOPENTENYL-DIPHOSPHATE DELTA-ISOMERASE"/>
    <property type="match status" value="1"/>
</dbReference>
<dbReference type="PANTHER" id="PTHR43665:SF1">
    <property type="entry name" value="ISOPENTENYL-DIPHOSPHATE DELTA-ISOMERASE"/>
    <property type="match status" value="1"/>
</dbReference>
<dbReference type="Pfam" id="PF01070">
    <property type="entry name" value="FMN_dh"/>
    <property type="match status" value="2"/>
</dbReference>
<dbReference type="PIRSF" id="PIRSF003314">
    <property type="entry name" value="IPP_isomerase"/>
    <property type="match status" value="1"/>
</dbReference>
<dbReference type="SUPFAM" id="SSF51395">
    <property type="entry name" value="FMN-linked oxidoreductases"/>
    <property type="match status" value="1"/>
</dbReference>
<evidence type="ECO:0000255" key="1">
    <source>
        <dbReference type="HAMAP-Rule" id="MF_00354"/>
    </source>
</evidence>
<reference key="1">
    <citation type="journal article" date="2008" name="Proc. Natl. Acad. Sci. U.S.A.">
        <title>Nitrogen fixation island and rhizosphere competence traits in the genome of root-associated Pseudomonas stutzeri A1501.</title>
        <authorList>
            <person name="Yan Y."/>
            <person name="Yang J."/>
            <person name="Dou Y."/>
            <person name="Chen M."/>
            <person name="Ping S."/>
            <person name="Peng J."/>
            <person name="Lu W."/>
            <person name="Zhang W."/>
            <person name="Yao Z."/>
            <person name="Li H."/>
            <person name="Liu W."/>
            <person name="He S."/>
            <person name="Geng L."/>
            <person name="Zhang X."/>
            <person name="Yang F."/>
            <person name="Yu H."/>
            <person name="Zhan Y."/>
            <person name="Li D."/>
            <person name="Lin Z."/>
            <person name="Wang Y."/>
            <person name="Elmerich C."/>
            <person name="Lin M."/>
            <person name="Jin Q."/>
        </authorList>
    </citation>
    <scope>NUCLEOTIDE SEQUENCE [LARGE SCALE GENOMIC DNA]</scope>
    <source>
        <strain>A1501</strain>
    </source>
</reference>
<comment type="function">
    <text evidence="1">Involved in the biosynthesis of isoprenoids. Catalyzes the 1,3-allylic rearrangement of the homoallylic substrate isopentenyl (IPP) to its allylic isomer, dimethylallyl diphosphate (DMAPP).</text>
</comment>
<comment type="catalytic activity">
    <reaction evidence="1">
        <text>isopentenyl diphosphate = dimethylallyl diphosphate</text>
        <dbReference type="Rhea" id="RHEA:23284"/>
        <dbReference type="ChEBI" id="CHEBI:57623"/>
        <dbReference type="ChEBI" id="CHEBI:128769"/>
        <dbReference type="EC" id="5.3.3.2"/>
    </reaction>
</comment>
<comment type="cofactor">
    <cofactor evidence="1">
        <name>FMN</name>
        <dbReference type="ChEBI" id="CHEBI:58210"/>
    </cofactor>
</comment>
<comment type="cofactor">
    <cofactor evidence="1">
        <name>NADPH</name>
        <dbReference type="ChEBI" id="CHEBI:57783"/>
    </cofactor>
</comment>
<comment type="cofactor">
    <cofactor evidence="1">
        <name>Mg(2+)</name>
        <dbReference type="ChEBI" id="CHEBI:18420"/>
    </cofactor>
</comment>
<comment type="subunit">
    <text evidence="1">Homooctamer. Dimer of tetramers.</text>
</comment>
<comment type="subcellular location">
    <subcellularLocation>
        <location evidence="1">Cytoplasm</location>
    </subcellularLocation>
</comment>
<comment type="similarity">
    <text evidence="1">Belongs to the IPP isomerase type 2 family.</text>
</comment>
<name>IDI2_STUS1</name>
<accession>A4VR98</accession>
<organism>
    <name type="scientific">Stutzerimonas stutzeri (strain A1501)</name>
    <name type="common">Pseudomonas stutzeri</name>
    <dbReference type="NCBI Taxonomy" id="379731"/>
    <lineage>
        <taxon>Bacteria</taxon>
        <taxon>Pseudomonadati</taxon>
        <taxon>Pseudomonadota</taxon>
        <taxon>Gammaproteobacteria</taxon>
        <taxon>Pseudomonadales</taxon>
        <taxon>Pseudomonadaceae</taxon>
        <taxon>Stutzerimonas</taxon>
    </lineage>
</organism>
<sequence length="346" mass="35687">MSKQSLVSRKNDHLDIVLDPTRAIAATGTGFGAFRFEHCALPELHLDQIDLQTALFGRRLRAPLLISSMTGGAARSAAINAHLAEAAQQLGIAMAVGSQRVALETAGDQGLTGQLRQLAPDILLLANFGAAQLVRGYGVDEARRAVEMIEGDALIVHLNPLQEAVQTGGDRDWRGVLQAIEALAARLPVPVVIKEVGAGISAAVARRLVDAGVAAIDVAGAGGTSWAAVEAARAADASQQAIAEAFADWGIPTAQALLAVRDACPNTPLIASGGIRDGVEAAKAICLGADLVGQAAGVLQAAMHSSEAVVSHFEVLIEQLRIACFCTGSADLAGLRQARLLQLSAC</sequence>
<keyword id="KW-0963">Cytoplasm</keyword>
<keyword id="KW-0285">Flavoprotein</keyword>
<keyword id="KW-0288">FMN</keyword>
<keyword id="KW-0413">Isomerase</keyword>
<keyword id="KW-0414">Isoprene biosynthesis</keyword>
<keyword id="KW-0460">Magnesium</keyword>
<keyword id="KW-0479">Metal-binding</keyword>
<keyword id="KW-0521">NADP</keyword>
<keyword id="KW-1185">Reference proteome</keyword>
<gene>
    <name evidence="1" type="primary">fni</name>
    <name type="ordered locus">PST_3876</name>
</gene>